<gene>
    <name type="primary">CCDC186</name>
    <name type="synonym">C10orf118</name>
</gene>
<organism>
    <name type="scientific">Homo sapiens</name>
    <name type="common">Human</name>
    <dbReference type="NCBI Taxonomy" id="9606"/>
    <lineage>
        <taxon>Eukaryota</taxon>
        <taxon>Metazoa</taxon>
        <taxon>Chordata</taxon>
        <taxon>Craniata</taxon>
        <taxon>Vertebrata</taxon>
        <taxon>Euteleostomi</taxon>
        <taxon>Mammalia</taxon>
        <taxon>Eutheria</taxon>
        <taxon>Euarchontoglires</taxon>
        <taxon>Primates</taxon>
        <taxon>Haplorrhini</taxon>
        <taxon>Catarrhini</taxon>
        <taxon>Hominidae</taxon>
        <taxon>Homo</taxon>
    </lineage>
</organism>
<accession>Q7Z3E2</accession>
<accession>Q2M2V6</accession>
<accession>Q3ZB81</accession>
<accession>Q6NS91</accession>
<accession>Q7RTP1</accession>
<accession>Q8N117</accession>
<accession>Q8N3G3</accession>
<accession>Q8N6C2</accession>
<accession>Q9NWA3</accession>
<protein>
    <recommendedName>
        <fullName>Coiled-coil domain-containing protein 186</fullName>
    </recommendedName>
    <alternativeName>
        <fullName>CTCL tumor antigen HD-CL-01/L14-2</fullName>
    </alternativeName>
</protein>
<reference key="1">
    <citation type="journal article" date="2007" name="BMC Genomics">
        <title>The full-ORF clone resource of the German cDNA consortium.</title>
        <authorList>
            <person name="Bechtel S."/>
            <person name="Rosenfelder H."/>
            <person name="Duda A."/>
            <person name="Schmidt C.P."/>
            <person name="Ernst U."/>
            <person name="Wellenreuther R."/>
            <person name="Mehrle A."/>
            <person name="Schuster C."/>
            <person name="Bahr A."/>
            <person name="Bloecker H."/>
            <person name="Heubner D."/>
            <person name="Hoerlein A."/>
            <person name="Michel G."/>
            <person name="Wedler H."/>
            <person name="Koehrer K."/>
            <person name="Ottenwaelder B."/>
            <person name="Poustka A."/>
            <person name="Wiemann S."/>
            <person name="Schupp I."/>
        </authorList>
    </citation>
    <scope>NUCLEOTIDE SEQUENCE [LARGE SCALE MRNA]</scope>
    <scope>VARIANT LYS-271</scope>
    <source>
        <tissue>Endometrial tumor</tissue>
        <tissue>Melanoma</tissue>
    </source>
</reference>
<reference key="2">
    <citation type="journal article" date="2004" name="Genome Res.">
        <title>The status, quality, and expansion of the NIH full-length cDNA project: the Mammalian Gene Collection (MGC).</title>
        <authorList>
            <consortium name="The MGC Project Team"/>
        </authorList>
    </citation>
    <scope>NUCLEOTIDE SEQUENCE [LARGE SCALE MRNA]</scope>
    <scope>VARIANTS ILE-85 AND LYS-271</scope>
    <source>
        <tissue>Testis</tissue>
    </source>
</reference>
<reference key="3">
    <citation type="journal article" date="2004" name="Br. J. Dermatol.">
        <title>SEREX identification of new tumour-associated antigens in cutaneous T-cell lymphoma.</title>
        <authorList>
            <person name="Hartmann T.B."/>
            <person name="Thiel D."/>
            <person name="Dummer R."/>
            <person name="Schadendorf D."/>
            <person name="Eichmueller S."/>
        </authorList>
    </citation>
    <scope>NUCLEOTIDE SEQUENCE [MRNA] OF 74-791</scope>
    <scope>VARIANTS ILE-85; GLN-179 AND LYS-271</scope>
    <source>
        <tissue>Lymphoma</tissue>
    </source>
</reference>
<reference key="4">
    <citation type="journal article" date="2004" name="Nat. Genet.">
        <title>Complete sequencing and characterization of 21,243 full-length human cDNAs.</title>
        <authorList>
            <person name="Ota T."/>
            <person name="Suzuki Y."/>
            <person name="Nishikawa T."/>
            <person name="Otsuki T."/>
            <person name="Sugiyama T."/>
            <person name="Irie R."/>
            <person name="Wakamatsu A."/>
            <person name="Hayashi K."/>
            <person name="Sato H."/>
            <person name="Nagai K."/>
            <person name="Kimura K."/>
            <person name="Makita H."/>
            <person name="Sekine M."/>
            <person name="Obayashi M."/>
            <person name="Nishi T."/>
            <person name="Shibahara T."/>
            <person name="Tanaka T."/>
            <person name="Ishii S."/>
            <person name="Yamamoto J."/>
            <person name="Saito K."/>
            <person name="Kawai Y."/>
            <person name="Isono Y."/>
            <person name="Nakamura Y."/>
            <person name="Nagahari K."/>
            <person name="Murakami K."/>
            <person name="Yasuda T."/>
            <person name="Iwayanagi T."/>
            <person name="Wagatsuma M."/>
            <person name="Shiratori A."/>
            <person name="Sudo H."/>
            <person name="Hosoiri T."/>
            <person name="Kaku Y."/>
            <person name="Kodaira H."/>
            <person name="Kondo H."/>
            <person name="Sugawara M."/>
            <person name="Takahashi M."/>
            <person name="Kanda K."/>
            <person name="Yokoi T."/>
            <person name="Furuya T."/>
            <person name="Kikkawa E."/>
            <person name="Omura Y."/>
            <person name="Abe K."/>
            <person name="Kamihara K."/>
            <person name="Katsuta N."/>
            <person name="Sato K."/>
            <person name="Tanikawa M."/>
            <person name="Yamazaki M."/>
            <person name="Ninomiya K."/>
            <person name="Ishibashi T."/>
            <person name="Yamashita H."/>
            <person name="Murakawa K."/>
            <person name="Fujimori K."/>
            <person name="Tanai H."/>
            <person name="Kimata M."/>
            <person name="Watanabe M."/>
            <person name="Hiraoka S."/>
            <person name="Chiba Y."/>
            <person name="Ishida S."/>
            <person name="Ono Y."/>
            <person name="Takiguchi S."/>
            <person name="Watanabe S."/>
            <person name="Yosida M."/>
            <person name="Hotuta T."/>
            <person name="Kusano J."/>
            <person name="Kanehori K."/>
            <person name="Takahashi-Fujii A."/>
            <person name="Hara H."/>
            <person name="Tanase T.-O."/>
            <person name="Nomura Y."/>
            <person name="Togiya S."/>
            <person name="Komai F."/>
            <person name="Hara R."/>
            <person name="Takeuchi K."/>
            <person name="Arita M."/>
            <person name="Imose N."/>
            <person name="Musashino K."/>
            <person name="Yuuki H."/>
            <person name="Oshima A."/>
            <person name="Sasaki N."/>
            <person name="Aotsuka S."/>
            <person name="Yoshikawa Y."/>
            <person name="Matsunawa H."/>
            <person name="Ichihara T."/>
            <person name="Shiohata N."/>
            <person name="Sano S."/>
            <person name="Moriya S."/>
            <person name="Momiyama H."/>
            <person name="Satoh N."/>
            <person name="Takami S."/>
            <person name="Terashima Y."/>
            <person name="Suzuki O."/>
            <person name="Nakagawa S."/>
            <person name="Senoh A."/>
            <person name="Mizoguchi H."/>
            <person name="Goto Y."/>
            <person name="Shimizu F."/>
            <person name="Wakebe H."/>
            <person name="Hishigaki H."/>
            <person name="Watanabe T."/>
            <person name="Sugiyama A."/>
            <person name="Takemoto M."/>
            <person name="Kawakami B."/>
            <person name="Yamazaki M."/>
            <person name="Watanabe K."/>
            <person name="Kumagai A."/>
            <person name="Itakura S."/>
            <person name="Fukuzumi Y."/>
            <person name="Fujimori Y."/>
            <person name="Komiyama M."/>
            <person name="Tashiro H."/>
            <person name="Tanigami A."/>
            <person name="Fujiwara T."/>
            <person name="Ono T."/>
            <person name="Yamada K."/>
            <person name="Fujii Y."/>
            <person name="Ozaki K."/>
            <person name="Hirao M."/>
            <person name="Ohmori Y."/>
            <person name="Kawabata A."/>
            <person name="Hikiji T."/>
            <person name="Kobatake N."/>
            <person name="Inagaki H."/>
            <person name="Ikema Y."/>
            <person name="Okamoto S."/>
            <person name="Okitani R."/>
            <person name="Kawakami T."/>
            <person name="Noguchi S."/>
            <person name="Itoh T."/>
            <person name="Shigeta K."/>
            <person name="Senba T."/>
            <person name="Matsumura K."/>
            <person name="Nakajima Y."/>
            <person name="Mizuno T."/>
            <person name="Morinaga M."/>
            <person name="Sasaki M."/>
            <person name="Togashi T."/>
            <person name="Oyama M."/>
            <person name="Hata H."/>
            <person name="Watanabe M."/>
            <person name="Komatsu T."/>
            <person name="Mizushima-Sugano J."/>
            <person name="Satoh T."/>
            <person name="Shirai Y."/>
            <person name="Takahashi Y."/>
            <person name="Nakagawa K."/>
            <person name="Okumura K."/>
            <person name="Nagase T."/>
            <person name="Nomura N."/>
            <person name="Kikuchi H."/>
            <person name="Masuho Y."/>
            <person name="Yamashita R."/>
            <person name="Nakai K."/>
            <person name="Yada T."/>
            <person name="Nakamura Y."/>
            <person name="Ohara O."/>
            <person name="Isogai T."/>
            <person name="Sugano S."/>
        </authorList>
    </citation>
    <scope>NUCLEOTIDE SEQUENCE [LARGE SCALE MRNA] OF 614-898</scope>
    <source>
        <tissue>Embryo</tissue>
        <tissue>Prostate</tissue>
    </source>
</reference>
<reference key="5">
    <citation type="journal article" date="2003" name="BMC Genomics">
        <title>Gene discovery in the hamster: a comparative genomics approach for gene annotation by sequencing of hamster testis cDNAs.</title>
        <authorList>
            <person name="Oduru S."/>
            <person name="Campbell J.L."/>
            <person name="Karri S."/>
            <person name="Hendry W.J."/>
            <person name="Khan S.A."/>
            <person name="Williams S.C."/>
        </authorList>
    </citation>
    <scope>IDENTIFICATION</scope>
</reference>
<reference key="6">
    <citation type="journal article" date="2009" name="Anal. Chem.">
        <title>Lys-N and trypsin cover complementary parts of the phosphoproteome in a refined SCX-based approach.</title>
        <authorList>
            <person name="Gauci S."/>
            <person name="Helbig A.O."/>
            <person name="Slijper M."/>
            <person name="Krijgsveld J."/>
            <person name="Heck A.J."/>
            <person name="Mohammed S."/>
        </authorList>
    </citation>
    <scope>ACETYLATION [LARGE SCALE ANALYSIS] AT SER-2</scope>
    <scope>CLEAVAGE OF INITIATOR METHIONINE [LARGE SCALE ANALYSIS]</scope>
    <scope>IDENTIFICATION BY MASS SPECTROMETRY [LARGE SCALE ANALYSIS]</scope>
</reference>
<reference key="7">
    <citation type="journal article" date="2013" name="J. Proteome Res.">
        <title>Toward a comprehensive characterization of a human cancer cell phosphoproteome.</title>
        <authorList>
            <person name="Zhou H."/>
            <person name="Di Palma S."/>
            <person name="Preisinger C."/>
            <person name="Peng M."/>
            <person name="Polat A.N."/>
            <person name="Heck A.J."/>
            <person name="Mohammed S."/>
        </authorList>
    </citation>
    <scope>IDENTIFICATION BY MASS SPECTROMETRY [LARGE SCALE ANALYSIS]</scope>
    <source>
        <tissue>Cervix carcinoma</tissue>
        <tissue>Erythroleukemia</tissue>
    </source>
</reference>
<reference key="8">
    <citation type="journal article" date="2014" name="J. Proteomics">
        <title>An enzyme assisted RP-RPLC approach for in-depth analysis of human liver phosphoproteome.</title>
        <authorList>
            <person name="Bian Y."/>
            <person name="Song C."/>
            <person name="Cheng K."/>
            <person name="Dong M."/>
            <person name="Wang F."/>
            <person name="Huang J."/>
            <person name="Sun D."/>
            <person name="Wang L."/>
            <person name="Ye M."/>
            <person name="Zou H."/>
        </authorList>
    </citation>
    <scope>IDENTIFICATION BY MASS SPECTROMETRY [LARGE SCALE ANALYSIS]</scope>
    <source>
        <tissue>Liver</tissue>
    </source>
</reference>
<feature type="initiator methionine" description="Removed" evidence="8">
    <location>
        <position position="1"/>
    </location>
</feature>
<feature type="chain" id="PRO_0000089823" description="Coiled-coil domain-containing protein 186">
    <location>
        <begin position="2"/>
        <end position="898"/>
    </location>
</feature>
<feature type="region of interest" description="Disordered" evidence="3">
    <location>
        <begin position="1"/>
        <end position="43"/>
    </location>
</feature>
<feature type="region of interest" description="Disordered" evidence="3">
    <location>
        <begin position="68"/>
        <end position="95"/>
    </location>
</feature>
<feature type="region of interest" description="Disordered" evidence="3">
    <location>
        <begin position="702"/>
        <end position="749"/>
    </location>
</feature>
<feature type="coiled-coil region" evidence="2">
    <location>
        <begin position="201"/>
        <end position="712"/>
    </location>
</feature>
<feature type="coiled-coil region" evidence="2">
    <location>
        <begin position="759"/>
        <end position="803"/>
    </location>
</feature>
<feature type="coiled-coil region" evidence="2">
    <location>
        <begin position="855"/>
        <end position="894"/>
    </location>
</feature>
<feature type="compositionally biased region" description="Polar residues" evidence="3">
    <location>
        <begin position="82"/>
        <end position="95"/>
    </location>
</feature>
<feature type="compositionally biased region" description="Basic and acidic residues" evidence="3">
    <location>
        <begin position="703"/>
        <end position="717"/>
    </location>
</feature>
<feature type="compositionally biased region" description="Low complexity" evidence="3">
    <location>
        <begin position="718"/>
        <end position="734"/>
    </location>
</feature>
<feature type="modified residue" description="N-acetylserine" evidence="8">
    <location>
        <position position="2"/>
    </location>
</feature>
<feature type="modified residue" description="Phosphoserine" evidence="1">
    <location>
        <position position="740"/>
    </location>
</feature>
<feature type="sequence variant" id="VAR_023047" description="In dbSNP:rs1061159." evidence="4 5">
    <original>T</original>
    <variation>I</variation>
    <location>
        <position position="85"/>
    </location>
</feature>
<feature type="sequence variant" id="VAR_023048" description="In dbSNP:rs12782946." evidence="4">
    <original>R</original>
    <variation>Q</variation>
    <location>
        <position position="179"/>
    </location>
</feature>
<feature type="sequence variant" id="VAR_023049" description="In dbSNP:rs7095762." evidence="4 5 6">
    <original>Q</original>
    <variation>K</variation>
    <location>
        <position position="271"/>
    </location>
</feature>
<feature type="sequence conflict" description="In Ref. 3; AAM44457." evidence="7" ref="3">
    <original>GGG</original>
    <variation>IRH</variation>
    <location>
        <begin position="74"/>
        <end position="76"/>
    </location>
</feature>
<feature type="sequence conflict" description="In Ref. 2; AAH70368." evidence="7" ref="2">
    <original>I</original>
    <variation>T</variation>
    <location>
        <position position="209"/>
    </location>
</feature>
<feature type="sequence conflict" description="In Ref. 4; BAA91480." evidence="7" ref="4">
    <original>D</original>
    <variation>I</variation>
    <location>
        <position position="614"/>
    </location>
</feature>
<feature type="sequence conflict" description="In Ref. 1; CAD39031." evidence="7" ref="1">
    <original>G</original>
    <variation>E</variation>
    <location>
        <position position="745"/>
    </location>
</feature>
<feature type="sequence conflict" description="In Ref. 1; CAD97928." evidence="7" ref="1">
    <original>Q</original>
    <variation>L</variation>
    <location>
        <position position="857"/>
    </location>
</feature>
<proteinExistence type="evidence at protein level"/>
<dbReference type="EMBL" id="AL834368">
    <property type="protein sequence ID" value="CAD39031.2"/>
    <property type="molecule type" value="mRNA"/>
</dbReference>
<dbReference type="EMBL" id="BX537964">
    <property type="protein sequence ID" value="CAD97928.1"/>
    <property type="molecule type" value="mRNA"/>
</dbReference>
<dbReference type="EMBL" id="BC070368">
    <property type="protein sequence ID" value="AAH70368.1"/>
    <property type="status" value="ALT_SEQ"/>
    <property type="molecule type" value="mRNA"/>
</dbReference>
<dbReference type="EMBL" id="BC103499">
    <property type="protein sequence ID" value="AAI03500.1"/>
    <property type="molecule type" value="mRNA"/>
</dbReference>
<dbReference type="EMBL" id="BC105632">
    <property type="protein sequence ID" value="AAI05633.1"/>
    <property type="molecule type" value="mRNA"/>
</dbReference>
<dbReference type="EMBL" id="BC152306">
    <property type="protein sequence ID" value="AAI52307.1"/>
    <property type="molecule type" value="mRNA"/>
</dbReference>
<dbReference type="EMBL" id="AF273054">
    <property type="protein sequence ID" value="AAM44457.1"/>
    <property type="status" value="ALT_SEQ"/>
    <property type="molecule type" value="mRNA"/>
</dbReference>
<dbReference type="EMBL" id="AK001050">
    <property type="protein sequence ID" value="BAA91480.1"/>
    <property type="status" value="ALT_INIT"/>
    <property type="molecule type" value="mRNA"/>
</dbReference>
<dbReference type="EMBL" id="AK092620">
    <property type="protein sequence ID" value="BAC03926.1"/>
    <property type="status" value="ALT_SEQ"/>
    <property type="molecule type" value="mRNA"/>
</dbReference>
<dbReference type="EMBL" id="BK001329">
    <property type="protein sequence ID" value="DAA01463.1"/>
    <property type="molecule type" value="mRNA"/>
</dbReference>
<dbReference type="CCDS" id="CCDS7587.1"/>
<dbReference type="RefSeq" id="NP_001308758.1">
    <property type="nucleotide sequence ID" value="NM_001321829.1"/>
</dbReference>
<dbReference type="RefSeq" id="NP_060487.2">
    <property type="nucleotide sequence ID" value="NM_018017.3"/>
</dbReference>
<dbReference type="RefSeq" id="NP_694981.1">
    <property type="nucleotide sequence ID" value="NM_153249.1"/>
</dbReference>
<dbReference type="SMR" id="Q7Z3E2"/>
<dbReference type="BioGRID" id="120401">
    <property type="interactions" value="34"/>
</dbReference>
<dbReference type="DIP" id="DIP-47298N"/>
<dbReference type="FunCoup" id="Q7Z3E2">
    <property type="interactions" value="884"/>
</dbReference>
<dbReference type="IntAct" id="Q7Z3E2">
    <property type="interactions" value="29"/>
</dbReference>
<dbReference type="MINT" id="Q7Z3E2"/>
<dbReference type="STRING" id="9606.ENSP00000498136"/>
<dbReference type="GlyGen" id="Q7Z3E2">
    <property type="glycosylation" value="1 site, 1 O-linked glycan (1 site)"/>
</dbReference>
<dbReference type="iPTMnet" id="Q7Z3E2"/>
<dbReference type="PhosphoSitePlus" id="Q7Z3E2"/>
<dbReference type="BioMuta" id="CCDC186"/>
<dbReference type="DMDM" id="71152997"/>
<dbReference type="jPOST" id="Q7Z3E2"/>
<dbReference type="MassIVE" id="Q7Z3E2"/>
<dbReference type="PaxDb" id="9606-ENSP00000358293"/>
<dbReference type="PeptideAtlas" id="Q7Z3E2"/>
<dbReference type="ProteomicsDB" id="69040"/>
<dbReference type="Pumba" id="Q7Z3E2"/>
<dbReference type="Antibodypedia" id="2907">
    <property type="antibodies" value="31 antibodies from 10 providers"/>
</dbReference>
<dbReference type="DNASU" id="55088"/>
<dbReference type="Ensembl" id="ENST00000369287.8">
    <property type="protein sequence ID" value="ENSP00000358293.3"/>
    <property type="gene ID" value="ENSG00000165813.20"/>
</dbReference>
<dbReference type="Ensembl" id="ENST00000648613.1">
    <property type="protein sequence ID" value="ENSP00000498136.1"/>
    <property type="gene ID" value="ENSG00000165813.20"/>
</dbReference>
<dbReference type="GeneID" id="55088"/>
<dbReference type="KEGG" id="hsa:55088"/>
<dbReference type="MANE-Select" id="ENST00000369287.8">
    <property type="protein sequence ID" value="ENSP00000358293.3"/>
    <property type="RefSeq nucleotide sequence ID" value="NM_018017.4"/>
    <property type="RefSeq protein sequence ID" value="NP_060487.2"/>
</dbReference>
<dbReference type="UCSC" id="uc001lbb.2">
    <property type="organism name" value="human"/>
</dbReference>
<dbReference type="AGR" id="HGNC:24349"/>
<dbReference type="CTD" id="55088"/>
<dbReference type="DisGeNET" id="55088"/>
<dbReference type="GeneCards" id="CCDC186"/>
<dbReference type="HGNC" id="HGNC:24349">
    <property type="gene designation" value="CCDC186"/>
</dbReference>
<dbReference type="HPA" id="ENSG00000165813">
    <property type="expression patterns" value="Low tissue specificity"/>
</dbReference>
<dbReference type="MalaCards" id="CCDC186"/>
<dbReference type="MIM" id="619249">
    <property type="type" value="gene"/>
</dbReference>
<dbReference type="neXtProt" id="NX_Q7Z3E2"/>
<dbReference type="OpenTargets" id="ENSG00000165813"/>
<dbReference type="PharmGKB" id="PA134904295"/>
<dbReference type="VEuPathDB" id="HostDB:ENSG00000165813"/>
<dbReference type="eggNOG" id="KOG0992">
    <property type="taxonomic scope" value="Eukaryota"/>
</dbReference>
<dbReference type="eggNOG" id="KOG1836">
    <property type="taxonomic scope" value="Eukaryota"/>
</dbReference>
<dbReference type="GeneTree" id="ENSGT00720000108851"/>
<dbReference type="HOGENOM" id="CLU_007958_0_0_1"/>
<dbReference type="InParanoid" id="Q7Z3E2"/>
<dbReference type="OMA" id="TLSNGMC"/>
<dbReference type="OrthoDB" id="5583482at2759"/>
<dbReference type="PAN-GO" id="Q7Z3E2">
    <property type="GO annotations" value="3 GO annotations based on evolutionary models"/>
</dbReference>
<dbReference type="PhylomeDB" id="Q7Z3E2"/>
<dbReference type="TreeFam" id="TF328785"/>
<dbReference type="PathwayCommons" id="Q7Z3E2"/>
<dbReference type="SignaLink" id="Q7Z3E2"/>
<dbReference type="BioGRID-ORCS" id="55088">
    <property type="hits" value="13 hits in 1143 CRISPR screens"/>
</dbReference>
<dbReference type="ChiTaRS" id="CCDC186">
    <property type="organism name" value="human"/>
</dbReference>
<dbReference type="GeneWiki" id="C10orf118"/>
<dbReference type="GenomeRNAi" id="55088"/>
<dbReference type="Pharos" id="Q7Z3E2">
    <property type="development level" value="Tdark"/>
</dbReference>
<dbReference type="PRO" id="PR:Q7Z3E2"/>
<dbReference type="Proteomes" id="UP000005640">
    <property type="component" value="Chromosome 10"/>
</dbReference>
<dbReference type="RNAct" id="Q7Z3E2">
    <property type="molecule type" value="protein"/>
</dbReference>
<dbReference type="Bgee" id="ENSG00000165813">
    <property type="expression patterns" value="Expressed in sperm and 180 other cell types or tissues"/>
</dbReference>
<dbReference type="ExpressionAtlas" id="Q7Z3E2">
    <property type="expression patterns" value="baseline and differential"/>
</dbReference>
<dbReference type="GO" id="GO:0005802">
    <property type="term" value="C:trans-Golgi network"/>
    <property type="evidence" value="ECO:0000318"/>
    <property type="project" value="GO_Central"/>
</dbReference>
<dbReference type="GO" id="GO:0031267">
    <property type="term" value="F:small GTPase binding"/>
    <property type="evidence" value="ECO:0000318"/>
    <property type="project" value="GO_Central"/>
</dbReference>
<dbReference type="GO" id="GO:0035773">
    <property type="term" value="P:insulin secretion involved in cellular response to glucose stimulus"/>
    <property type="evidence" value="ECO:0007669"/>
    <property type="project" value="Ensembl"/>
</dbReference>
<dbReference type="GO" id="GO:0009617">
    <property type="term" value="P:response to bacterium"/>
    <property type="evidence" value="ECO:0007669"/>
    <property type="project" value="Ensembl"/>
</dbReference>
<dbReference type="GO" id="GO:0099518">
    <property type="term" value="P:vesicle cytoskeletal trafficking"/>
    <property type="evidence" value="ECO:0000318"/>
    <property type="project" value="GO_Central"/>
</dbReference>
<dbReference type="Gene3D" id="1.10.287.1490">
    <property type="match status" value="1"/>
</dbReference>
<dbReference type="InterPro" id="IPR038830">
    <property type="entry name" value="CCDC186"/>
</dbReference>
<dbReference type="PANTHER" id="PTHR18911:SF5">
    <property type="entry name" value="COILED-COIL DOMAIN-CONTAINING PROTEIN 186"/>
    <property type="match status" value="1"/>
</dbReference>
<dbReference type="PANTHER" id="PTHR18911">
    <property type="entry name" value="CTCL TUMOR ANTIGEN HD-CL-01"/>
    <property type="match status" value="1"/>
</dbReference>
<sequence length="898" mass="103687">MSETDHIASTSSDKNVGKTPELKEDSCNLFSGNESSKLENESKLLSLNTDKTLCQPNEHNNRIEAQENYIPDHGGGEDSCAKTDTGSENSEQIANFPSGNFAKHISKTNETEQKVTQILVELRSSTFPESANEKTYSESPYDTDCTKKFISKIKSVSASEDLLEEIESELLSTEFAEHRVPNGMNKGEHALVLFEKCVQDKYLQQEHIIKKLIKENKKHQELFVDICSEKDNLREELKKRTETEKQHMNTIKQLESRIEELNKEVKASRDQLIAQDVTAKNAVQQLHKEMAQRMEQANKKCEEARQEKEAMVMKYVRGEKESLDLRKEKETLEKKLRDANKELEKNTNKIKQLSQEKGRLHQLYETKEGETTRLIREIDKLKEDINSHVIKVKWAQNKLKAEMDSHKETKDKLKETTTKLTQAKEEADQIRKNCQDMIKTYQESEEIKSNELDAKLRVTKGELEKQMQEKSDQLEMHHAKIKELEDLKRTFKEGMDELRTLRTKVKCLEDERLRTEDELSKYKEIINRQKAEIQNLLDKVKTADQLQEQLQRGKQEIENLKEEVESLNSLINDLQKDIEGSRKRESELLLFTERLTSKNAQLQSESNSLQSQFDKVSCSESQLQSQCEQMKQTNINLESRLLKEEELRKEEVQTLQAELACRQTEVKALSTQVEELKDELVTQRRKHASSIKDLTKQLQQARRKLDQVESGSYDKEVSSMGSRSSSSGSLNARSSAEDRSPENTGSSVAVDNFPQVDKAMLIERIVRLQKAHARKNEKIEFMEDHIKQLVEEIRKKTKIIQSYILREESGTLSSEASDFNKVHLSRRGGIMASLYTSHPADNGLTLELSLEINRKLQAVLEDTLLKNITLKENLQTLGTEIERLIKHQHELEQRTKKT</sequence>
<comment type="sequence caution" evidence="7">
    <conflict type="miscellaneous discrepancy">
        <sequence resource="EMBL-CDS" id="AAH70368"/>
    </conflict>
    <text>Contaminating sequence. Potential poly-A sequence starting in position 212.</text>
</comment>
<comment type="sequence caution" evidence="7">
    <conflict type="erroneous initiation">
        <sequence resource="EMBL-CDS" id="AAM44457"/>
    </conflict>
    <text>Truncated N-terminus.</text>
</comment>
<comment type="sequence caution" evidence="7">
    <conflict type="miscellaneous discrepancy">
        <sequence resource="EMBL-CDS" id="AAM44457"/>
    </conflict>
    <text>Contaminating sequence. Potential poly-A sequence starting in position 792.</text>
</comment>
<comment type="sequence caution" evidence="7">
    <conflict type="erroneous initiation">
        <sequence resource="EMBL-CDS" id="BAA91480"/>
    </conflict>
</comment>
<comment type="sequence caution" evidence="7">
    <conflict type="miscellaneous discrepancy">
        <sequence resource="EMBL-CDS" id="BAC03926"/>
    </conflict>
    <text>Intron retention.</text>
</comment>
<evidence type="ECO:0000250" key="1">
    <source>
        <dbReference type="UniProtKB" id="Q8C9S4"/>
    </source>
</evidence>
<evidence type="ECO:0000255" key="2"/>
<evidence type="ECO:0000256" key="3">
    <source>
        <dbReference type="SAM" id="MobiDB-lite"/>
    </source>
</evidence>
<evidence type="ECO:0000269" key="4">
    <source>
    </source>
</evidence>
<evidence type="ECO:0000269" key="5">
    <source>
    </source>
</evidence>
<evidence type="ECO:0000269" key="6">
    <source>
    </source>
</evidence>
<evidence type="ECO:0000305" key="7"/>
<evidence type="ECO:0007744" key="8">
    <source>
    </source>
</evidence>
<keyword id="KW-0007">Acetylation</keyword>
<keyword id="KW-0175">Coiled coil</keyword>
<keyword id="KW-0597">Phosphoprotein</keyword>
<keyword id="KW-1267">Proteomics identification</keyword>
<keyword id="KW-1185">Reference proteome</keyword>
<name>CC186_HUMAN</name>